<proteinExistence type="evidence at protein level"/>
<protein>
    <recommendedName>
        <fullName evidence="3">Pancreatic polypeptide</fullName>
        <shortName evidence="3">PP</shortName>
    </recommendedName>
</protein>
<organism>
    <name type="scientific">Meleagris gallopavo</name>
    <name type="common">Wild turkey</name>
    <dbReference type="NCBI Taxonomy" id="9103"/>
    <lineage>
        <taxon>Eukaryota</taxon>
        <taxon>Metazoa</taxon>
        <taxon>Chordata</taxon>
        <taxon>Craniata</taxon>
        <taxon>Vertebrata</taxon>
        <taxon>Euteleostomi</taxon>
        <taxon>Archelosauria</taxon>
        <taxon>Archosauria</taxon>
        <taxon>Dinosauria</taxon>
        <taxon>Saurischia</taxon>
        <taxon>Theropoda</taxon>
        <taxon>Coelurosauria</taxon>
        <taxon>Aves</taxon>
        <taxon>Neognathae</taxon>
        <taxon>Galloanserae</taxon>
        <taxon>Galliformes</taxon>
        <taxon>Phasianidae</taxon>
        <taxon>Meleagridinae</taxon>
        <taxon>Meleagris</taxon>
    </lineage>
</organism>
<accession>P68249</accession>
<accession>P01306</accession>
<gene>
    <name type="primary">PPY</name>
</gene>
<evidence type="ECO:0000250" key="1"/>
<evidence type="ECO:0000250" key="2">
    <source>
        <dbReference type="UniProtKB" id="P01298"/>
    </source>
</evidence>
<evidence type="ECO:0000303" key="3">
    <source>
    </source>
</evidence>
<evidence type="ECO:0000305" key="4"/>
<evidence type="ECO:0007829" key="5">
    <source>
        <dbReference type="PDB" id="2BF9"/>
    </source>
</evidence>
<evidence type="ECO:0007829" key="6">
    <source>
        <dbReference type="PDB" id="2H3S"/>
    </source>
</evidence>
<keyword id="KW-0002">3D-structure</keyword>
<keyword id="KW-0027">Amidation</keyword>
<keyword id="KW-0165">Cleavage on pair of basic residues</keyword>
<keyword id="KW-0903">Direct protein sequencing</keyword>
<keyword id="KW-0372">Hormone</keyword>
<keyword id="KW-1185">Reference proteome</keyword>
<keyword id="KW-0964">Secreted</keyword>
<sequence length="36" mass="4239">GPSQPTYPGDDAPVEDLIRFYNDLQQYLNVVTRHRY</sequence>
<dbReference type="PDB" id="1PPT">
    <property type="method" value="X-ray"/>
    <property type="resolution" value="1.37 A"/>
    <property type="chains" value="A=1-36"/>
</dbReference>
<dbReference type="PDB" id="2BF9">
    <property type="method" value="X-ray"/>
    <property type="resolution" value="0.99 A"/>
    <property type="chains" value="A=1-35"/>
</dbReference>
<dbReference type="PDB" id="2H3S">
    <property type="method" value="NMR"/>
    <property type="chains" value="A=1-9, B=13-36"/>
</dbReference>
<dbReference type="PDB" id="2H3T">
    <property type="method" value="NMR"/>
    <property type="chains" value="A=1-9, B=13-36"/>
</dbReference>
<dbReference type="PDB" id="2H4B">
    <property type="method" value="NMR"/>
    <property type="chains" value="A/B=1-9, C/D=13-36"/>
</dbReference>
<dbReference type="PDBsum" id="1PPT"/>
<dbReference type="PDBsum" id="2BF9"/>
<dbReference type="PDBsum" id="2H3S"/>
<dbReference type="PDBsum" id="2H3T"/>
<dbReference type="PDBsum" id="2H4B"/>
<dbReference type="BMRB" id="P68249"/>
<dbReference type="SMR" id="P68249"/>
<dbReference type="InParanoid" id="P68249"/>
<dbReference type="EvolutionaryTrace" id="P68249"/>
<dbReference type="Proteomes" id="UP000001645">
    <property type="component" value="Unplaced"/>
</dbReference>
<dbReference type="GO" id="GO:0005615">
    <property type="term" value="C:extracellular space"/>
    <property type="evidence" value="ECO:0007669"/>
    <property type="project" value="TreeGrafter"/>
</dbReference>
<dbReference type="GO" id="GO:0005184">
    <property type="term" value="F:neuropeptide hormone activity"/>
    <property type="evidence" value="ECO:0007669"/>
    <property type="project" value="TreeGrafter"/>
</dbReference>
<dbReference type="GO" id="GO:0031841">
    <property type="term" value="F:neuropeptide Y receptor binding"/>
    <property type="evidence" value="ECO:0007669"/>
    <property type="project" value="TreeGrafter"/>
</dbReference>
<dbReference type="GO" id="GO:0007631">
    <property type="term" value="P:feeding behavior"/>
    <property type="evidence" value="ECO:0007669"/>
    <property type="project" value="TreeGrafter"/>
</dbReference>
<dbReference type="GO" id="GO:0007218">
    <property type="term" value="P:neuropeptide signaling pathway"/>
    <property type="evidence" value="ECO:0007669"/>
    <property type="project" value="TreeGrafter"/>
</dbReference>
<dbReference type="CDD" id="cd00126">
    <property type="entry name" value="PAH"/>
    <property type="match status" value="1"/>
</dbReference>
<dbReference type="Gene3D" id="6.10.250.900">
    <property type="match status" value="1"/>
</dbReference>
<dbReference type="InterPro" id="IPR001955">
    <property type="entry name" value="Pancreatic_hormone-like"/>
</dbReference>
<dbReference type="InterPro" id="IPR020392">
    <property type="entry name" value="Pancreatic_hormone-like_CS"/>
</dbReference>
<dbReference type="PANTHER" id="PTHR10533">
    <property type="entry name" value="NEUROPEPTIDE Y/PANCREATIC HORMONE/PEPTIDE YY"/>
    <property type="match status" value="1"/>
</dbReference>
<dbReference type="PANTHER" id="PTHR10533:SF5">
    <property type="entry name" value="PRO-NEUROPEPTIDE Y"/>
    <property type="match status" value="1"/>
</dbReference>
<dbReference type="Pfam" id="PF00159">
    <property type="entry name" value="Hormone_3"/>
    <property type="match status" value="1"/>
</dbReference>
<dbReference type="PRINTS" id="PR00278">
    <property type="entry name" value="PANCHORMONE"/>
</dbReference>
<dbReference type="SMART" id="SM00309">
    <property type="entry name" value="PAH"/>
    <property type="match status" value="1"/>
</dbReference>
<dbReference type="PROSITE" id="PS00265">
    <property type="entry name" value="PANCREATIC_HORMONE_1"/>
    <property type="match status" value="1"/>
</dbReference>
<dbReference type="PROSITE" id="PS50276">
    <property type="entry name" value="PANCREATIC_HORMONE_2"/>
    <property type="match status" value="1"/>
</dbReference>
<reference key="1">
    <citation type="journal article" date="1977" name="Eur. J. Biochem.">
        <title>Purification, crystallisation and preliminary X-ray studies on avian pancreatic polypeptide.</title>
        <authorList>
            <person name="Wood S.P."/>
            <person name="Pitts J.E."/>
            <person name="Blundell T.L."/>
            <person name="Tickle I.J."/>
            <person name="Jenkins J.A."/>
        </authorList>
    </citation>
    <scope>PROTEIN SEQUENCE</scope>
    <scope>CRYSTALLIZATION</scope>
    <source>
        <tissue>Pancreas</tissue>
    </source>
</reference>
<reference key="2">
    <citation type="journal article" date="1981" name="Proc. Natl. Acad. Sci. U.S.A.">
        <title>X-ray analysis (1.4-A resolution) of avian pancreatic polypeptide. Small globular protein hormone.</title>
        <authorList>
            <person name="Blundell T.L."/>
            <person name="Pitts J.E."/>
            <person name="Tickle I.J."/>
            <person name="Wood S.P."/>
            <person name="Wu C.-W."/>
        </authorList>
    </citation>
    <scope>X-RAY CRYSTALLOGRAPHY (1.4 ANGSTROMS)</scope>
</reference>
<reference key="3">
    <citation type="journal article" date="1983" name="Biopolymers">
        <title>Conformational flexibility in a small globular hormone: X-ray analysis of avian pancreatic polypeptide at 0.98-A resolution.</title>
        <authorList>
            <person name="Glover I."/>
            <person name="Maneef I."/>
            <person name="Pitts J."/>
            <person name="Woods S.P."/>
            <person name="Moss D."/>
            <person name="Tickle I."/>
            <person name="Blundell T.L."/>
        </authorList>
    </citation>
    <scope>X-RAY CRYSTALLOGRAPHY (0.98 ANGSTROMS)</scope>
</reference>
<name>PAHO_MELGA</name>
<feature type="peptide" id="PRO_0000044805" description="Pancreatic polypeptide">
    <location>
        <begin position="1"/>
        <end position="36"/>
    </location>
</feature>
<feature type="modified residue" description="Tyrosine amide" evidence="1">
    <location>
        <position position="36"/>
    </location>
</feature>
<feature type="helix" evidence="5">
    <location>
        <begin position="14"/>
        <end position="31"/>
    </location>
</feature>
<feature type="helix" evidence="6">
    <location>
        <begin position="32"/>
        <end position="35"/>
    </location>
</feature>
<comment type="function">
    <text evidence="2">Hormone secreted by pancreatic cells that acts as a regulator of pancreatic and gastrointestinal functions.</text>
</comment>
<comment type="subcellular location">
    <subcellularLocation>
        <location evidence="2">Secreted</location>
    </subcellularLocation>
</comment>
<comment type="similarity">
    <text evidence="4">Belongs to the NPY family.</text>
</comment>